<accession>B3Q6L0</accession>
<comment type="function">
    <text evidence="1">Catalyzes the reversible conversion of 2-phosphoglycerate (2-PG) into phosphoenolpyruvate (PEP). It is essential for the degradation of carbohydrates via glycolysis.</text>
</comment>
<comment type="catalytic activity">
    <reaction evidence="1">
        <text>(2R)-2-phosphoglycerate = phosphoenolpyruvate + H2O</text>
        <dbReference type="Rhea" id="RHEA:10164"/>
        <dbReference type="ChEBI" id="CHEBI:15377"/>
        <dbReference type="ChEBI" id="CHEBI:58289"/>
        <dbReference type="ChEBI" id="CHEBI:58702"/>
        <dbReference type="EC" id="4.2.1.11"/>
    </reaction>
</comment>
<comment type="cofactor">
    <cofactor evidence="1">
        <name>Mg(2+)</name>
        <dbReference type="ChEBI" id="CHEBI:18420"/>
    </cofactor>
    <text evidence="1">Binds a second Mg(2+) ion via substrate during catalysis.</text>
</comment>
<comment type="pathway">
    <text evidence="1">Carbohydrate degradation; glycolysis; pyruvate from D-glyceraldehyde 3-phosphate: step 4/5.</text>
</comment>
<comment type="subcellular location">
    <subcellularLocation>
        <location evidence="1">Cytoplasm</location>
    </subcellularLocation>
    <subcellularLocation>
        <location evidence="1">Secreted</location>
    </subcellularLocation>
    <subcellularLocation>
        <location evidence="1">Cell surface</location>
    </subcellularLocation>
    <text evidence="1">Fractions of enolase are present in both the cytoplasm and on the cell surface.</text>
</comment>
<comment type="similarity">
    <text evidence="1">Belongs to the enolase family.</text>
</comment>
<dbReference type="EC" id="4.2.1.11" evidence="1"/>
<dbReference type="EMBL" id="CP001096">
    <property type="protein sequence ID" value="ACF01719.1"/>
    <property type="molecule type" value="Genomic_DNA"/>
</dbReference>
<dbReference type="RefSeq" id="WP_012496318.1">
    <property type="nucleotide sequence ID" value="NC_011004.1"/>
</dbReference>
<dbReference type="SMR" id="B3Q6L0"/>
<dbReference type="KEGG" id="rpt:Rpal_3216"/>
<dbReference type="HOGENOM" id="CLU_031223_2_1_5"/>
<dbReference type="OrthoDB" id="9804716at2"/>
<dbReference type="UniPathway" id="UPA00109">
    <property type="reaction ID" value="UER00187"/>
</dbReference>
<dbReference type="Proteomes" id="UP000001725">
    <property type="component" value="Chromosome"/>
</dbReference>
<dbReference type="GO" id="GO:0009986">
    <property type="term" value="C:cell surface"/>
    <property type="evidence" value="ECO:0007669"/>
    <property type="project" value="UniProtKB-SubCell"/>
</dbReference>
<dbReference type="GO" id="GO:0005576">
    <property type="term" value="C:extracellular region"/>
    <property type="evidence" value="ECO:0007669"/>
    <property type="project" value="UniProtKB-SubCell"/>
</dbReference>
<dbReference type="GO" id="GO:0000015">
    <property type="term" value="C:phosphopyruvate hydratase complex"/>
    <property type="evidence" value="ECO:0007669"/>
    <property type="project" value="InterPro"/>
</dbReference>
<dbReference type="GO" id="GO:0000287">
    <property type="term" value="F:magnesium ion binding"/>
    <property type="evidence" value="ECO:0007669"/>
    <property type="project" value="UniProtKB-UniRule"/>
</dbReference>
<dbReference type="GO" id="GO:0004634">
    <property type="term" value="F:phosphopyruvate hydratase activity"/>
    <property type="evidence" value="ECO:0007669"/>
    <property type="project" value="UniProtKB-UniRule"/>
</dbReference>
<dbReference type="GO" id="GO:0006096">
    <property type="term" value="P:glycolytic process"/>
    <property type="evidence" value="ECO:0007669"/>
    <property type="project" value="UniProtKB-UniRule"/>
</dbReference>
<dbReference type="CDD" id="cd03313">
    <property type="entry name" value="enolase"/>
    <property type="match status" value="1"/>
</dbReference>
<dbReference type="FunFam" id="3.20.20.120:FF:000001">
    <property type="entry name" value="Enolase"/>
    <property type="match status" value="1"/>
</dbReference>
<dbReference type="FunFam" id="3.30.390.10:FF:000001">
    <property type="entry name" value="Enolase"/>
    <property type="match status" value="1"/>
</dbReference>
<dbReference type="Gene3D" id="3.20.20.120">
    <property type="entry name" value="Enolase-like C-terminal domain"/>
    <property type="match status" value="1"/>
</dbReference>
<dbReference type="Gene3D" id="3.30.390.10">
    <property type="entry name" value="Enolase-like, N-terminal domain"/>
    <property type="match status" value="1"/>
</dbReference>
<dbReference type="HAMAP" id="MF_00318">
    <property type="entry name" value="Enolase"/>
    <property type="match status" value="1"/>
</dbReference>
<dbReference type="InterPro" id="IPR000941">
    <property type="entry name" value="Enolase"/>
</dbReference>
<dbReference type="InterPro" id="IPR036849">
    <property type="entry name" value="Enolase-like_C_sf"/>
</dbReference>
<dbReference type="InterPro" id="IPR029017">
    <property type="entry name" value="Enolase-like_N"/>
</dbReference>
<dbReference type="InterPro" id="IPR020810">
    <property type="entry name" value="Enolase_C"/>
</dbReference>
<dbReference type="InterPro" id="IPR020809">
    <property type="entry name" value="Enolase_CS"/>
</dbReference>
<dbReference type="InterPro" id="IPR020811">
    <property type="entry name" value="Enolase_N"/>
</dbReference>
<dbReference type="NCBIfam" id="TIGR01060">
    <property type="entry name" value="eno"/>
    <property type="match status" value="1"/>
</dbReference>
<dbReference type="PANTHER" id="PTHR11902">
    <property type="entry name" value="ENOLASE"/>
    <property type="match status" value="1"/>
</dbReference>
<dbReference type="PANTHER" id="PTHR11902:SF1">
    <property type="entry name" value="ENOLASE"/>
    <property type="match status" value="1"/>
</dbReference>
<dbReference type="Pfam" id="PF00113">
    <property type="entry name" value="Enolase_C"/>
    <property type="match status" value="1"/>
</dbReference>
<dbReference type="Pfam" id="PF03952">
    <property type="entry name" value="Enolase_N"/>
    <property type="match status" value="1"/>
</dbReference>
<dbReference type="PIRSF" id="PIRSF001400">
    <property type="entry name" value="Enolase"/>
    <property type="match status" value="1"/>
</dbReference>
<dbReference type="PRINTS" id="PR00148">
    <property type="entry name" value="ENOLASE"/>
</dbReference>
<dbReference type="SFLD" id="SFLDS00001">
    <property type="entry name" value="Enolase"/>
    <property type="match status" value="1"/>
</dbReference>
<dbReference type="SFLD" id="SFLDF00002">
    <property type="entry name" value="enolase"/>
    <property type="match status" value="1"/>
</dbReference>
<dbReference type="SMART" id="SM01192">
    <property type="entry name" value="Enolase_C"/>
    <property type="match status" value="1"/>
</dbReference>
<dbReference type="SMART" id="SM01193">
    <property type="entry name" value="Enolase_N"/>
    <property type="match status" value="1"/>
</dbReference>
<dbReference type="SUPFAM" id="SSF51604">
    <property type="entry name" value="Enolase C-terminal domain-like"/>
    <property type="match status" value="1"/>
</dbReference>
<dbReference type="SUPFAM" id="SSF54826">
    <property type="entry name" value="Enolase N-terminal domain-like"/>
    <property type="match status" value="1"/>
</dbReference>
<dbReference type="PROSITE" id="PS00164">
    <property type="entry name" value="ENOLASE"/>
    <property type="match status" value="1"/>
</dbReference>
<keyword id="KW-0963">Cytoplasm</keyword>
<keyword id="KW-0324">Glycolysis</keyword>
<keyword id="KW-0456">Lyase</keyword>
<keyword id="KW-0460">Magnesium</keyword>
<keyword id="KW-0479">Metal-binding</keyword>
<keyword id="KW-0964">Secreted</keyword>
<sequence>MTAIVDIIGREILDSRGNPTVEVDVVLEDGSVGRAAVPSGASTGAHEAVELRDGDKARYLGKGVQKAVEAVNGELFDALGGMDAEQQVQIDQTMIELDGTPNKGRIGANAILGVSLAAAKAAAASYDMPLYRYVGGTSARTLPVPMMNIVNGGVHADNPIDFQEFMIMPVGAPTFADALRCGSEIFHTLKGELKKAGHNTNVGDEGGFAPNLPSADAALDFVMAAIGKAGYKAGDDVMLALDCAATEFFKDGAYVYGGENKTRSRSEQAKYLADLVARYPIVSIEDGMSEDDMDGWKELTDLIGSKCQLVGDDLFVTNVTRLADGIKNGRANSILIKVNQIGTLTETLAAVEMAHKAGYTAVMSHRSGETEDSTIADLAVATNCGQIKTGSLARADRTAKYNQLLRIEQELGAHAHYAGKAALKALR</sequence>
<feature type="chain" id="PRO_1000115905" description="Enolase">
    <location>
        <begin position="1"/>
        <end position="427"/>
    </location>
</feature>
<feature type="active site" description="Proton donor" evidence="1">
    <location>
        <position position="205"/>
    </location>
</feature>
<feature type="active site" description="Proton acceptor" evidence="1">
    <location>
        <position position="337"/>
    </location>
</feature>
<feature type="binding site" evidence="1">
    <location>
        <position position="163"/>
    </location>
    <ligand>
        <name>(2R)-2-phosphoglycerate</name>
        <dbReference type="ChEBI" id="CHEBI:58289"/>
    </ligand>
</feature>
<feature type="binding site" evidence="1">
    <location>
        <position position="242"/>
    </location>
    <ligand>
        <name>Mg(2+)</name>
        <dbReference type="ChEBI" id="CHEBI:18420"/>
    </ligand>
</feature>
<feature type="binding site" evidence="1">
    <location>
        <position position="285"/>
    </location>
    <ligand>
        <name>Mg(2+)</name>
        <dbReference type="ChEBI" id="CHEBI:18420"/>
    </ligand>
</feature>
<feature type="binding site" evidence="1">
    <location>
        <position position="312"/>
    </location>
    <ligand>
        <name>Mg(2+)</name>
        <dbReference type="ChEBI" id="CHEBI:18420"/>
    </ligand>
</feature>
<feature type="binding site" evidence="1">
    <location>
        <position position="337"/>
    </location>
    <ligand>
        <name>(2R)-2-phosphoglycerate</name>
        <dbReference type="ChEBI" id="CHEBI:58289"/>
    </ligand>
</feature>
<feature type="binding site" evidence="1">
    <location>
        <position position="366"/>
    </location>
    <ligand>
        <name>(2R)-2-phosphoglycerate</name>
        <dbReference type="ChEBI" id="CHEBI:58289"/>
    </ligand>
</feature>
<feature type="binding site" evidence="1">
    <location>
        <position position="367"/>
    </location>
    <ligand>
        <name>(2R)-2-phosphoglycerate</name>
        <dbReference type="ChEBI" id="CHEBI:58289"/>
    </ligand>
</feature>
<feature type="binding site" evidence="1">
    <location>
        <position position="388"/>
    </location>
    <ligand>
        <name>(2R)-2-phosphoglycerate</name>
        <dbReference type="ChEBI" id="CHEBI:58289"/>
    </ligand>
</feature>
<organism>
    <name type="scientific">Rhodopseudomonas palustris (strain TIE-1)</name>
    <dbReference type="NCBI Taxonomy" id="395960"/>
    <lineage>
        <taxon>Bacteria</taxon>
        <taxon>Pseudomonadati</taxon>
        <taxon>Pseudomonadota</taxon>
        <taxon>Alphaproteobacteria</taxon>
        <taxon>Hyphomicrobiales</taxon>
        <taxon>Nitrobacteraceae</taxon>
        <taxon>Rhodopseudomonas</taxon>
    </lineage>
</organism>
<protein>
    <recommendedName>
        <fullName evidence="1">Enolase</fullName>
        <ecNumber evidence="1">4.2.1.11</ecNumber>
    </recommendedName>
    <alternativeName>
        <fullName evidence="1">2-phospho-D-glycerate hydro-lyase</fullName>
    </alternativeName>
    <alternativeName>
        <fullName evidence="1">2-phosphoglycerate dehydratase</fullName>
    </alternativeName>
</protein>
<name>ENO_RHOPT</name>
<reference key="1">
    <citation type="submission" date="2008-05" db="EMBL/GenBank/DDBJ databases">
        <title>Complete sequence of Rhodopseudomonas palustris TIE-1.</title>
        <authorList>
            <consortium name="US DOE Joint Genome Institute"/>
            <person name="Lucas S."/>
            <person name="Copeland A."/>
            <person name="Lapidus A."/>
            <person name="Glavina del Rio T."/>
            <person name="Dalin E."/>
            <person name="Tice H."/>
            <person name="Pitluck S."/>
            <person name="Chain P."/>
            <person name="Malfatti S."/>
            <person name="Shin M."/>
            <person name="Vergez L."/>
            <person name="Lang D."/>
            <person name="Schmutz J."/>
            <person name="Larimer F."/>
            <person name="Land M."/>
            <person name="Hauser L."/>
            <person name="Kyrpides N."/>
            <person name="Mikhailova N."/>
            <person name="Emerson D."/>
            <person name="Newman D.K."/>
            <person name="Roden E."/>
            <person name="Richardson P."/>
        </authorList>
    </citation>
    <scope>NUCLEOTIDE SEQUENCE [LARGE SCALE GENOMIC DNA]</scope>
    <source>
        <strain>TIE-1</strain>
    </source>
</reference>
<evidence type="ECO:0000255" key="1">
    <source>
        <dbReference type="HAMAP-Rule" id="MF_00318"/>
    </source>
</evidence>
<gene>
    <name evidence="1" type="primary">eno</name>
    <name type="ordered locus">Rpal_3216</name>
</gene>
<proteinExistence type="inferred from homology"/>